<comment type="function">
    <text evidence="2">One of the essential components for the initiation of protein synthesis. Protects formylmethionyl-tRNA from spontaneous hydrolysis and promotes its binding to the 30S ribosomal subunits. Also involved in the hydrolysis of GTP during the formation of the 70S ribosomal complex.</text>
</comment>
<comment type="subcellular location">
    <subcellularLocation>
        <location evidence="2">Cytoplasm</location>
    </subcellularLocation>
</comment>
<comment type="similarity">
    <text evidence="2">Belongs to the TRAFAC class translation factor GTPase superfamily. Classic translation factor GTPase family. IF-2 subfamily.</text>
</comment>
<sequence>MSKTRVYELAQQMGIDNKELMARLADAGVSVKNHMAVLEDSDIKALSAPAQTPHKEVSQEEVRVKPTLIRRRAKAVEPEAASAEAASAPAAQEEAPQKAEPEKVEAEKAEAPKPRQAAEPVRARIIEAAPVPKPAAAPAEAAKPEKAKPAEPAPVAAAPKAAEAPAAPAAEAAPAAPAPAEAPVAKPAAKLEASAPAAPAAPAAAAPVEAQAPAKAEEQEPEKATPTRARILGRVEIPIPAQRPAERREYQRTAPGERPAPRPGMPRGVERPGTERPAPRPGGPRPAGAPGRPGERPTTGRPGGPTGGRPDRPAPLAPIDAPPLLGDDRRKGRKPAPAGGTDYAKNGKKGAPAAAGKGKKDSFKDILDKRERVFEPGPRSKGRKGKYEKVQIGKKTEITVPKAIKRIIKISESITVGELAKRMGIKATDLIRALMKLGVMATINHPLDFDTATLLATDFGYEIENVALDVDEILEAEPDTPESLLKRPPVVTIMGHVDHGKTSLLDAIREANVIAGEAGGITQHIGAYDVELNGKKITFLDTPGHEAFTAMRARGAKVTDIVILVVAADDGVMPQTREAVNHSKAAGVPIIVAINKIDKPDASPGKVKQELMEFGLVSEEWGGETIFVEVSAKKRINLESLLEMVLLQADVLELRANPDKPARGTIVEAKLDKGRGPVATVLVQEGTLKSGDYFVAGVHYGRVRAMQNDRGEKVLAAGPAMPVEVIGFNGVPDAGDIFVAMGDEKQAKEIANHRQMKLRESELAKHSKLSLEQLYEKIQKGEVKDLNAIVKGDVQGSVEAVAESLRKLSTDAIRLNVLHASVGAITETDVNLASASNAIILGFNVRPEVKAAALAEKEGVDVRLYNIIYDAVDDIKKAMEGLLEPTFKEKYLGRAEIREVFSVPKAGMVAGSYVTDGKIVRNAQVRLLRDNMVVYEGKLGSLRRFKDDVKEVATGYECGMSLENYNDLKIGDIFECFEMEKVAGKL</sequence>
<reference key="1">
    <citation type="submission" date="2008-07" db="EMBL/GenBank/DDBJ databases">
        <title>Complete sequence of Geobacter bemidjiensis BEM.</title>
        <authorList>
            <consortium name="US DOE Joint Genome Institute"/>
            <person name="Lucas S."/>
            <person name="Copeland A."/>
            <person name="Lapidus A."/>
            <person name="Glavina del Rio T."/>
            <person name="Dalin E."/>
            <person name="Tice H."/>
            <person name="Bruce D."/>
            <person name="Goodwin L."/>
            <person name="Pitluck S."/>
            <person name="Kiss H."/>
            <person name="Brettin T."/>
            <person name="Detter J.C."/>
            <person name="Han C."/>
            <person name="Kuske C.R."/>
            <person name="Schmutz J."/>
            <person name="Larimer F."/>
            <person name="Land M."/>
            <person name="Hauser L."/>
            <person name="Kyrpides N."/>
            <person name="Lykidis A."/>
            <person name="Lovley D."/>
            <person name="Richardson P."/>
        </authorList>
    </citation>
    <scope>NUCLEOTIDE SEQUENCE [LARGE SCALE GENOMIC DNA]</scope>
    <source>
        <strain>ATCC BAA-1014 / DSM 16622 / JCM 12645 / Bem</strain>
    </source>
</reference>
<proteinExistence type="inferred from homology"/>
<feature type="chain" id="PRO_1000093788" description="Translation initiation factor IF-2">
    <location>
        <begin position="1"/>
        <end position="986"/>
    </location>
</feature>
<feature type="domain" description="tr-type G">
    <location>
        <begin position="486"/>
        <end position="653"/>
    </location>
</feature>
<feature type="region of interest" description="Disordered" evidence="3">
    <location>
        <begin position="47"/>
        <end position="388"/>
    </location>
</feature>
<feature type="region of interest" description="G1" evidence="1">
    <location>
        <begin position="495"/>
        <end position="502"/>
    </location>
</feature>
<feature type="region of interest" description="G2" evidence="1">
    <location>
        <begin position="520"/>
        <end position="524"/>
    </location>
</feature>
<feature type="region of interest" description="G3" evidence="1">
    <location>
        <begin position="541"/>
        <end position="544"/>
    </location>
</feature>
<feature type="region of interest" description="G4" evidence="1">
    <location>
        <begin position="595"/>
        <end position="598"/>
    </location>
</feature>
<feature type="region of interest" description="G5" evidence="1">
    <location>
        <begin position="631"/>
        <end position="633"/>
    </location>
</feature>
<feature type="compositionally biased region" description="Basic and acidic residues" evidence="3">
    <location>
        <begin position="53"/>
        <end position="64"/>
    </location>
</feature>
<feature type="compositionally biased region" description="Low complexity" evidence="3">
    <location>
        <begin position="78"/>
        <end position="94"/>
    </location>
</feature>
<feature type="compositionally biased region" description="Basic and acidic residues" evidence="3">
    <location>
        <begin position="95"/>
        <end position="113"/>
    </location>
</feature>
<feature type="compositionally biased region" description="Low complexity" evidence="3">
    <location>
        <begin position="127"/>
        <end position="141"/>
    </location>
</feature>
<feature type="compositionally biased region" description="Low complexity" evidence="3">
    <location>
        <begin position="153"/>
        <end position="214"/>
    </location>
</feature>
<feature type="compositionally biased region" description="Basic and acidic residues" evidence="3">
    <location>
        <begin position="215"/>
        <end position="225"/>
    </location>
</feature>
<feature type="compositionally biased region" description="Basic and acidic residues" evidence="3">
    <location>
        <begin position="268"/>
        <end position="278"/>
    </location>
</feature>
<feature type="compositionally biased region" description="Low complexity" evidence="3">
    <location>
        <begin position="286"/>
        <end position="300"/>
    </location>
</feature>
<feature type="compositionally biased region" description="Basic and acidic residues" evidence="3">
    <location>
        <begin position="358"/>
        <end position="374"/>
    </location>
</feature>
<feature type="binding site" evidence="2">
    <location>
        <begin position="495"/>
        <end position="502"/>
    </location>
    <ligand>
        <name>GTP</name>
        <dbReference type="ChEBI" id="CHEBI:37565"/>
    </ligand>
</feature>
<feature type="binding site" evidence="2">
    <location>
        <begin position="541"/>
        <end position="545"/>
    </location>
    <ligand>
        <name>GTP</name>
        <dbReference type="ChEBI" id="CHEBI:37565"/>
    </ligand>
</feature>
<feature type="binding site" evidence="2">
    <location>
        <begin position="595"/>
        <end position="598"/>
    </location>
    <ligand>
        <name>GTP</name>
        <dbReference type="ChEBI" id="CHEBI:37565"/>
    </ligand>
</feature>
<accession>B5EI57</accession>
<gene>
    <name evidence="2" type="primary">infB</name>
    <name type="ordered locus">Gbem_1302</name>
</gene>
<evidence type="ECO:0000250" key="1"/>
<evidence type="ECO:0000255" key="2">
    <source>
        <dbReference type="HAMAP-Rule" id="MF_00100"/>
    </source>
</evidence>
<evidence type="ECO:0000256" key="3">
    <source>
        <dbReference type="SAM" id="MobiDB-lite"/>
    </source>
</evidence>
<keyword id="KW-0963">Cytoplasm</keyword>
<keyword id="KW-0342">GTP-binding</keyword>
<keyword id="KW-0396">Initiation factor</keyword>
<keyword id="KW-0547">Nucleotide-binding</keyword>
<keyword id="KW-0648">Protein biosynthesis</keyword>
<keyword id="KW-1185">Reference proteome</keyword>
<organism>
    <name type="scientific">Citrifermentans bemidjiense (strain ATCC BAA-1014 / DSM 16622 / JCM 12645 / Bem)</name>
    <name type="common">Geobacter bemidjiensis</name>
    <dbReference type="NCBI Taxonomy" id="404380"/>
    <lineage>
        <taxon>Bacteria</taxon>
        <taxon>Pseudomonadati</taxon>
        <taxon>Thermodesulfobacteriota</taxon>
        <taxon>Desulfuromonadia</taxon>
        <taxon>Geobacterales</taxon>
        <taxon>Geobacteraceae</taxon>
        <taxon>Citrifermentans</taxon>
    </lineage>
</organism>
<dbReference type="EMBL" id="CP001124">
    <property type="protein sequence ID" value="ACH38321.1"/>
    <property type="molecule type" value="Genomic_DNA"/>
</dbReference>
<dbReference type="RefSeq" id="WP_012529733.1">
    <property type="nucleotide sequence ID" value="NC_011146.1"/>
</dbReference>
<dbReference type="SMR" id="B5EI57"/>
<dbReference type="STRING" id="404380.Gbem_1302"/>
<dbReference type="KEGG" id="gbm:Gbem_1302"/>
<dbReference type="eggNOG" id="COG0532">
    <property type="taxonomic scope" value="Bacteria"/>
</dbReference>
<dbReference type="HOGENOM" id="CLU_006301_5_1_7"/>
<dbReference type="OrthoDB" id="9811804at2"/>
<dbReference type="Proteomes" id="UP000008825">
    <property type="component" value="Chromosome"/>
</dbReference>
<dbReference type="GO" id="GO:0005829">
    <property type="term" value="C:cytosol"/>
    <property type="evidence" value="ECO:0007669"/>
    <property type="project" value="TreeGrafter"/>
</dbReference>
<dbReference type="GO" id="GO:0005525">
    <property type="term" value="F:GTP binding"/>
    <property type="evidence" value="ECO:0007669"/>
    <property type="project" value="UniProtKB-KW"/>
</dbReference>
<dbReference type="GO" id="GO:0003924">
    <property type="term" value="F:GTPase activity"/>
    <property type="evidence" value="ECO:0007669"/>
    <property type="project" value="UniProtKB-UniRule"/>
</dbReference>
<dbReference type="GO" id="GO:0003743">
    <property type="term" value="F:translation initiation factor activity"/>
    <property type="evidence" value="ECO:0007669"/>
    <property type="project" value="UniProtKB-UniRule"/>
</dbReference>
<dbReference type="CDD" id="cd01887">
    <property type="entry name" value="IF2_eIF5B"/>
    <property type="match status" value="1"/>
</dbReference>
<dbReference type="CDD" id="cd03702">
    <property type="entry name" value="IF2_mtIF2_II"/>
    <property type="match status" value="1"/>
</dbReference>
<dbReference type="CDD" id="cd03692">
    <property type="entry name" value="mtIF2_IVc"/>
    <property type="match status" value="1"/>
</dbReference>
<dbReference type="FunFam" id="2.40.30.10:FF:000007">
    <property type="entry name" value="Translation initiation factor IF-2"/>
    <property type="match status" value="1"/>
</dbReference>
<dbReference type="FunFam" id="2.40.30.10:FF:000008">
    <property type="entry name" value="Translation initiation factor IF-2"/>
    <property type="match status" value="1"/>
</dbReference>
<dbReference type="FunFam" id="3.40.50.10050:FF:000001">
    <property type="entry name" value="Translation initiation factor IF-2"/>
    <property type="match status" value="1"/>
</dbReference>
<dbReference type="FunFam" id="3.40.50.300:FF:000019">
    <property type="entry name" value="Translation initiation factor IF-2"/>
    <property type="match status" value="1"/>
</dbReference>
<dbReference type="Gene3D" id="1.10.10.2480">
    <property type="match status" value="1"/>
</dbReference>
<dbReference type="Gene3D" id="3.40.50.300">
    <property type="entry name" value="P-loop containing nucleotide triphosphate hydrolases"/>
    <property type="match status" value="1"/>
</dbReference>
<dbReference type="Gene3D" id="2.40.30.10">
    <property type="entry name" value="Translation factors"/>
    <property type="match status" value="2"/>
</dbReference>
<dbReference type="Gene3D" id="3.40.50.10050">
    <property type="entry name" value="Translation initiation factor IF- 2, domain 3"/>
    <property type="match status" value="1"/>
</dbReference>
<dbReference type="HAMAP" id="MF_00100_B">
    <property type="entry name" value="IF_2_B"/>
    <property type="match status" value="1"/>
</dbReference>
<dbReference type="InterPro" id="IPR053905">
    <property type="entry name" value="EF-G-like_DII"/>
</dbReference>
<dbReference type="InterPro" id="IPR044145">
    <property type="entry name" value="IF2_II"/>
</dbReference>
<dbReference type="InterPro" id="IPR006847">
    <property type="entry name" value="IF2_N"/>
</dbReference>
<dbReference type="InterPro" id="IPR027417">
    <property type="entry name" value="P-loop_NTPase"/>
</dbReference>
<dbReference type="InterPro" id="IPR005225">
    <property type="entry name" value="Small_GTP-bd"/>
</dbReference>
<dbReference type="InterPro" id="IPR000795">
    <property type="entry name" value="T_Tr_GTP-bd_dom"/>
</dbReference>
<dbReference type="InterPro" id="IPR000178">
    <property type="entry name" value="TF_IF2_bacterial-like"/>
</dbReference>
<dbReference type="InterPro" id="IPR015760">
    <property type="entry name" value="TIF_IF2"/>
</dbReference>
<dbReference type="InterPro" id="IPR023115">
    <property type="entry name" value="TIF_IF2_dom3"/>
</dbReference>
<dbReference type="InterPro" id="IPR036925">
    <property type="entry name" value="TIF_IF2_dom3_sf"/>
</dbReference>
<dbReference type="InterPro" id="IPR009000">
    <property type="entry name" value="Transl_B-barrel_sf"/>
</dbReference>
<dbReference type="NCBIfam" id="TIGR00487">
    <property type="entry name" value="IF-2"/>
    <property type="match status" value="1"/>
</dbReference>
<dbReference type="NCBIfam" id="TIGR00231">
    <property type="entry name" value="small_GTP"/>
    <property type="match status" value="1"/>
</dbReference>
<dbReference type="PANTHER" id="PTHR43381:SF5">
    <property type="entry name" value="TR-TYPE G DOMAIN-CONTAINING PROTEIN"/>
    <property type="match status" value="1"/>
</dbReference>
<dbReference type="PANTHER" id="PTHR43381">
    <property type="entry name" value="TRANSLATION INITIATION FACTOR IF-2-RELATED"/>
    <property type="match status" value="1"/>
</dbReference>
<dbReference type="Pfam" id="PF22042">
    <property type="entry name" value="EF-G_D2"/>
    <property type="match status" value="1"/>
</dbReference>
<dbReference type="Pfam" id="PF00009">
    <property type="entry name" value="GTP_EFTU"/>
    <property type="match status" value="1"/>
</dbReference>
<dbReference type="Pfam" id="PF11987">
    <property type="entry name" value="IF-2"/>
    <property type="match status" value="1"/>
</dbReference>
<dbReference type="Pfam" id="PF04760">
    <property type="entry name" value="IF2_N"/>
    <property type="match status" value="2"/>
</dbReference>
<dbReference type="PRINTS" id="PR00449">
    <property type="entry name" value="RASTRNSFRMNG"/>
</dbReference>
<dbReference type="SUPFAM" id="SSF52156">
    <property type="entry name" value="Initiation factor IF2/eIF5b, domain 3"/>
    <property type="match status" value="1"/>
</dbReference>
<dbReference type="SUPFAM" id="SSF52540">
    <property type="entry name" value="P-loop containing nucleoside triphosphate hydrolases"/>
    <property type="match status" value="1"/>
</dbReference>
<dbReference type="SUPFAM" id="SSF50447">
    <property type="entry name" value="Translation proteins"/>
    <property type="match status" value="2"/>
</dbReference>
<dbReference type="PROSITE" id="PS51722">
    <property type="entry name" value="G_TR_2"/>
    <property type="match status" value="1"/>
</dbReference>
<dbReference type="PROSITE" id="PS01176">
    <property type="entry name" value="IF2"/>
    <property type="match status" value="1"/>
</dbReference>
<name>IF2_CITBB</name>
<protein>
    <recommendedName>
        <fullName evidence="2">Translation initiation factor IF-2</fullName>
    </recommendedName>
</protein>